<accession>Q06R93</accession>
<reference key="1">
    <citation type="journal article" date="2007" name="Mol. Biol. Evol.">
        <title>Gene relocations within chloroplast genomes of Jasminum and Menodora (Oleaceae) are due to multiple, overlapping inversions.</title>
        <authorList>
            <person name="Lee H.-L."/>
            <person name="Jansen R.K."/>
            <person name="Chumley T.W."/>
            <person name="Kim K.-J."/>
        </authorList>
    </citation>
    <scope>NUCLEOTIDE SEQUENCE [LARGE SCALE GENOMIC DNA]</scope>
</reference>
<sequence>MGQKINPLGFRLGTTQGHHSLWISQPKNYSKGLKEDQNIRDFIQNYIQKNMRISSRDRVEGIARIEIKKTIDLIQIIIFMGFPIENRPRKVKEKIKELQIHLEKEFHYVKKKLKIAITKIAKPYQNPKILAEFLAGQLKDRVSFRKAMKKAIELAEQADTEGIRVQMAGRINGKDIARVEWIRRGRLPLQTIRTKIDYCCYTIRTIYGVLGIKIWIFIDEK</sequence>
<geneLocation type="chloroplast"/>
<gene>
    <name type="primary">rps3</name>
    <name type="ORF">JNC0913</name>
</gene>
<feature type="chain" id="PRO_0000276993" description="Small ribosomal subunit protein uS3c">
    <location>
        <begin position="1"/>
        <end position="221"/>
    </location>
</feature>
<feature type="domain" description="KH type-2">
    <location>
        <begin position="43"/>
        <end position="121"/>
    </location>
</feature>
<organism>
    <name type="scientific">Jasminum nudiflorum</name>
    <name type="common">Winter jasmine</name>
    <dbReference type="NCBI Taxonomy" id="126431"/>
    <lineage>
        <taxon>Eukaryota</taxon>
        <taxon>Viridiplantae</taxon>
        <taxon>Streptophyta</taxon>
        <taxon>Embryophyta</taxon>
        <taxon>Tracheophyta</taxon>
        <taxon>Spermatophyta</taxon>
        <taxon>Magnoliopsida</taxon>
        <taxon>eudicotyledons</taxon>
        <taxon>Gunneridae</taxon>
        <taxon>Pentapetalae</taxon>
        <taxon>asterids</taxon>
        <taxon>lamiids</taxon>
        <taxon>Lamiales</taxon>
        <taxon>Oleaceae</taxon>
        <taxon>Jasmineae</taxon>
        <taxon>Jasminum</taxon>
    </lineage>
</organism>
<dbReference type="EMBL" id="DQ673255">
    <property type="protein sequence ID" value="ABG74665.1"/>
    <property type="molecule type" value="Genomic_DNA"/>
</dbReference>
<dbReference type="RefSeq" id="YP_778528.1">
    <property type="nucleotide sequence ID" value="NC_008407.1"/>
</dbReference>
<dbReference type="SMR" id="Q06R93"/>
<dbReference type="GeneID" id="4319793"/>
<dbReference type="GO" id="GO:0009507">
    <property type="term" value="C:chloroplast"/>
    <property type="evidence" value="ECO:0007669"/>
    <property type="project" value="UniProtKB-SubCell"/>
</dbReference>
<dbReference type="GO" id="GO:0022627">
    <property type="term" value="C:cytosolic small ribosomal subunit"/>
    <property type="evidence" value="ECO:0007669"/>
    <property type="project" value="TreeGrafter"/>
</dbReference>
<dbReference type="GO" id="GO:0019843">
    <property type="term" value="F:rRNA binding"/>
    <property type="evidence" value="ECO:0007669"/>
    <property type="project" value="UniProtKB-KW"/>
</dbReference>
<dbReference type="GO" id="GO:0003735">
    <property type="term" value="F:structural constituent of ribosome"/>
    <property type="evidence" value="ECO:0007669"/>
    <property type="project" value="InterPro"/>
</dbReference>
<dbReference type="GO" id="GO:0006412">
    <property type="term" value="P:translation"/>
    <property type="evidence" value="ECO:0007669"/>
    <property type="project" value="UniProtKB-UniRule"/>
</dbReference>
<dbReference type="CDD" id="cd02412">
    <property type="entry name" value="KH-II_30S_S3"/>
    <property type="match status" value="1"/>
</dbReference>
<dbReference type="FunFam" id="3.30.1140.32:FF:000003">
    <property type="entry name" value="30S ribosomal protein S3, chloroplastic"/>
    <property type="match status" value="1"/>
</dbReference>
<dbReference type="Gene3D" id="3.30.300.20">
    <property type="match status" value="1"/>
</dbReference>
<dbReference type="Gene3D" id="3.30.1140.32">
    <property type="entry name" value="Ribosomal protein S3, C-terminal domain"/>
    <property type="match status" value="1"/>
</dbReference>
<dbReference type="HAMAP" id="MF_01309_B">
    <property type="entry name" value="Ribosomal_uS3_B"/>
    <property type="match status" value="1"/>
</dbReference>
<dbReference type="InterPro" id="IPR015946">
    <property type="entry name" value="KH_dom-like_a/b"/>
</dbReference>
<dbReference type="InterPro" id="IPR009019">
    <property type="entry name" value="KH_sf_prok-type"/>
</dbReference>
<dbReference type="InterPro" id="IPR036419">
    <property type="entry name" value="Ribosomal_S3_C_sf"/>
</dbReference>
<dbReference type="InterPro" id="IPR005704">
    <property type="entry name" value="Ribosomal_uS3_bac-typ"/>
</dbReference>
<dbReference type="InterPro" id="IPR001351">
    <property type="entry name" value="Ribosomal_uS3_C"/>
</dbReference>
<dbReference type="InterPro" id="IPR018280">
    <property type="entry name" value="Ribosomal_uS3_CS"/>
</dbReference>
<dbReference type="NCBIfam" id="TIGR01009">
    <property type="entry name" value="rpsC_bact"/>
    <property type="match status" value="1"/>
</dbReference>
<dbReference type="PANTHER" id="PTHR11760">
    <property type="entry name" value="30S/40S RIBOSOMAL PROTEIN S3"/>
    <property type="match status" value="1"/>
</dbReference>
<dbReference type="PANTHER" id="PTHR11760:SF19">
    <property type="entry name" value="SMALL RIBOSOMAL SUBUNIT PROTEIN US3C"/>
    <property type="match status" value="1"/>
</dbReference>
<dbReference type="Pfam" id="PF00189">
    <property type="entry name" value="Ribosomal_S3_C"/>
    <property type="match status" value="1"/>
</dbReference>
<dbReference type="SUPFAM" id="SSF54814">
    <property type="entry name" value="Prokaryotic type KH domain (KH-domain type II)"/>
    <property type="match status" value="1"/>
</dbReference>
<dbReference type="SUPFAM" id="SSF54821">
    <property type="entry name" value="Ribosomal protein S3 C-terminal domain"/>
    <property type="match status" value="1"/>
</dbReference>
<dbReference type="PROSITE" id="PS00548">
    <property type="entry name" value="RIBOSOMAL_S3"/>
    <property type="match status" value="1"/>
</dbReference>
<comment type="subunit">
    <text evidence="1">Part of the 30S ribosomal subunit.</text>
</comment>
<comment type="subcellular location">
    <subcellularLocation>
        <location>Plastid</location>
        <location>Chloroplast</location>
    </subcellularLocation>
</comment>
<comment type="similarity">
    <text evidence="2">Belongs to the universal ribosomal protein uS3 family.</text>
</comment>
<proteinExistence type="inferred from homology"/>
<name>RR3_JASNU</name>
<keyword id="KW-0150">Chloroplast</keyword>
<keyword id="KW-0934">Plastid</keyword>
<keyword id="KW-0687">Ribonucleoprotein</keyword>
<keyword id="KW-0689">Ribosomal protein</keyword>
<keyword id="KW-0694">RNA-binding</keyword>
<keyword id="KW-0699">rRNA-binding</keyword>
<evidence type="ECO:0000250" key="1"/>
<evidence type="ECO:0000305" key="2"/>
<protein>
    <recommendedName>
        <fullName evidence="2">Small ribosomal subunit protein uS3c</fullName>
    </recommendedName>
    <alternativeName>
        <fullName>30S ribosomal protein S3, chloroplastic</fullName>
    </alternativeName>
</protein>